<organism>
    <name type="scientific">Coccidioides immitis (strain RS)</name>
    <name type="common">Valley fever fungus</name>
    <dbReference type="NCBI Taxonomy" id="246410"/>
    <lineage>
        <taxon>Eukaryota</taxon>
        <taxon>Fungi</taxon>
        <taxon>Dikarya</taxon>
        <taxon>Ascomycota</taxon>
        <taxon>Pezizomycotina</taxon>
        <taxon>Eurotiomycetes</taxon>
        <taxon>Eurotiomycetidae</taxon>
        <taxon>Onygenales</taxon>
        <taxon>Onygenaceae</taxon>
        <taxon>Coccidioides</taxon>
    </lineage>
</organism>
<dbReference type="EMBL" id="GG704913">
    <property type="protein sequence ID" value="EAS29232.3"/>
    <property type="molecule type" value="Genomic_DNA"/>
</dbReference>
<dbReference type="RefSeq" id="XP_001240815.1">
    <property type="nucleotide sequence ID" value="XM_001240814.2"/>
</dbReference>
<dbReference type="SMR" id="Q1DNY5"/>
<dbReference type="STRING" id="246410.Q1DNY5"/>
<dbReference type="GeneID" id="4559418"/>
<dbReference type="KEGG" id="cim:CIMG_07978"/>
<dbReference type="VEuPathDB" id="FungiDB:CIMG_07978"/>
<dbReference type="InParanoid" id="Q1DNY5"/>
<dbReference type="OMA" id="YAHGRAW"/>
<dbReference type="OrthoDB" id="270763at2759"/>
<dbReference type="Proteomes" id="UP000001261">
    <property type="component" value="Unassembled WGS sequence"/>
</dbReference>
<dbReference type="GO" id="GO:0005762">
    <property type="term" value="C:mitochondrial large ribosomal subunit"/>
    <property type="evidence" value="ECO:0007669"/>
    <property type="project" value="TreeGrafter"/>
</dbReference>
<dbReference type="GO" id="GO:0003735">
    <property type="term" value="F:structural constituent of ribosome"/>
    <property type="evidence" value="ECO:0007669"/>
    <property type="project" value="InterPro"/>
</dbReference>
<dbReference type="GO" id="GO:0032543">
    <property type="term" value="P:mitochondrial translation"/>
    <property type="evidence" value="ECO:0007669"/>
    <property type="project" value="TreeGrafter"/>
</dbReference>
<dbReference type="Gene3D" id="6.10.330.20">
    <property type="match status" value="1"/>
</dbReference>
<dbReference type="InterPro" id="IPR038340">
    <property type="entry name" value="MRP-L47_sf"/>
</dbReference>
<dbReference type="InterPro" id="IPR010729">
    <property type="entry name" value="Ribosomal_uL29_mit"/>
</dbReference>
<dbReference type="PANTHER" id="PTHR21183:SF18">
    <property type="entry name" value="LARGE RIBOSOMAL SUBUNIT PROTEIN UL29M"/>
    <property type="match status" value="1"/>
</dbReference>
<dbReference type="PANTHER" id="PTHR21183">
    <property type="entry name" value="RIBOSOMAL PROTEIN L47, MITOCHONDRIAL-RELATED"/>
    <property type="match status" value="1"/>
</dbReference>
<dbReference type="Pfam" id="PF06984">
    <property type="entry name" value="MRP-L47"/>
    <property type="match status" value="1"/>
</dbReference>
<name>RM04_COCIM</name>
<accession>Q1DNY5</accession>
<accession>J3K582</accession>
<comment type="subunit">
    <text evidence="1">Component of the mitochondrial large ribosomal subunit. Mature mitochondrial ribosomes consist of a small (37S) and a large (54S) subunit. The 37S subunit contains at least 33 different proteins and 1 molecule of RNA (15S). The 54S subunit contains at least 45 different proteins and 1 molecule of RNA (21S) (By similarity).</text>
</comment>
<comment type="subcellular location">
    <subcellularLocation>
        <location evidence="1">Mitochondrion</location>
    </subcellularLocation>
</comment>
<comment type="similarity">
    <text evidence="4">Belongs to the universal ribosomal protein uL29 family.</text>
</comment>
<sequence>MASRSVISFLYQQGGLSLAELPPAFLAPALYSTKASFNSQRSQFSTSSSPAARDRSRFRGVSAIHRTGPKQPLPVSKYPLPKPASPEQQEKRPANPDHGLWGFFGPNKQAIPTPEEEYAHGRAWTIQELRQKSWDDLHCLWWVTVRERNRIATSNYERKRLAAGYGDFEADNRDKTVRATQHAIKHVLRERWYAWNEARELYNGGYRPSPDEVLEEETETAMPTEVMPEELDSSTKSETTTSKNI</sequence>
<feature type="transit peptide" description="Mitochondrion" evidence="2">
    <location>
        <begin position="1"/>
        <end status="unknown"/>
    </location>
</feature>
<feature type="chain" id="PRO_0000372399" description="Large ribosomal subunit protein uL29m">
    <location>
        <begin status="unknown"/>
        <end position="245"/>
    </location>
</feature>
<feature type="region of interest" description="Disordered" evidence="3">
    <location>
        <begin position="36"/>
        <end position="98"/>
    </location>
</feature>
<feature type="region of interest" description="Disordered" evidence="3">
    <location>
        <begin position="207"/>
        <end position="245"/>
    </location>
</feature>
<feature type="compositionally biased region" description="Low complexity" evidence="3">
    <location>
        <begin position="36"/>
        <end position="49"/>
    </location>
</feature>
<feature type="compositionally biased region" description="Low complexity" evidence="3">
    <location>
        <begin position="234"/>
        <end position="245"/>
    </location>
</feature>
<protein>
    <recommendedName>
        <fullName evidence="4">Large ribosomal subunit protein uL29m</fullName>
    </recommendedName>
    <alternativeName>
        <fullName>54S ribosomal protein L4, mitochondrial</fullName>
    </alternativeName>
</protein>
<gene>
    <name type="primary">MRPL4</name>
    <name type="ORF">CIMG_07978</name>
</gene>
<proteinExistence type="inferred from homology"/>
<keyword id="KW-0496">Mitochondrion</keyword>
<keyword id="KW-1185">Reference proteome</keyword>
<keyword id="KW-0687">Ribonucleoprotein</keyword>
<keyword id="KW-0689">Ribosomal protein</keyword>
<keyword id="KW-0809">Transit peptide</keyword>
<evidence type="ECO:0000250" key="1"/>
<evidence type="ECO:0000255" key="2"/>
<evidence type="ECO:0000256" key="3">
    <source>
        <dbReference type="SAM" id="MobiDB-lite"/>
    </source>
</evidence>
<evidence type="ECO:0000305" key="4"/>
<reference key="1">
    <citation type="journal article" date="2009" name="Genome Res.">
        <title>Comparative genomic analyses of the human fungal pathogens Coccidioides and their relatives.</title>
        <authorList>
            <person name="Sharpton T.J."/>
            <person name="Stajich J.E."/>
            <person name="Rounsley S.D."/>
            <person name="Gardner M.J."/>
            <person name="Wortman J.R."/>
            <person name="Jordar V.S."/>
            <person name="Maiti R."/>
            <person name="Kodira C.D."/>
            <person name="Neafsey D.E."/>
            <person name="Zeng Q."/>
            <person name="Hung C.-Y."/>
            <person name="McMahan C."/>
            <person name="Muszewska A."/>
            <person name="Grynberg M."/>
            <person name="Mandel M.A."/>
            <person name="Kellner E.M."/>
            <person name="Barker B.M."/>
            <person name="Galgiani J.N."/>
            <person name="Orbach M.J."/>
            <person name="Kirkland T.N."/>
            <person name="Cole G.T."/>
            <person name="Henn M.R."/>
            <person name="Birren B.W."/>
            <person name="Taylor J.W."/>
        </authorList>
    </citation>
    <scope>NUCLEOTIDE SEQUENCE [LARGE SCALE GENOMIC DNA]</scope>
    <source>
        <strain>RS</strain>
    </source>
</reference>
<reference key="2">
    <citation type="journal article" date="2010" name="Genome Res.">
        <title>Population genomic sequencing of Coccidioides fungi reveals recent hybridization and transposon control.</title>
        <authorList>
            <person name="Neafsey D.E."/>
            <person name="Barker B.M."/>
            <person name="Sharpton T.J."/>
            <person name="Stajich J.E."/>
            <person name="Park D.J."/>
            <person name="Whiston E."/>
            <person name="Hung C.-Y."/>
            <person name="McMahan C."/>
            <person name="White J."/>
            <person name="Sykes S."/>
            <person name="Heiman D."/>
            <person name="Young S."/>
            <person name="Zeng Q."/>
            <person name="Abouelleil A."/>
            <person name="Aftuck L."/>
            <person name="Bessette D."/>
            <person name="Brown A."/>
            <person name="FitzGerald M."/>
            <person name="Lui A."/>
            <person name="Macdonald J.P."/>
            <person name="Priest M."/>
            <person name="Orbach M.J."/>
            <person name="Galgiani J.N."/>
            <person name="Kirkland T.N."/>
            <person name="Cole G.T."/>
            <person name="Birren B.W."/>
            <person name="Henn M.R."/>
            <person name="Taylor J.W."/>
            <person name="Rounsley S.D."/>
        </authorList>
    </citation>
    <scope>GENOME REANNOTATION</scope>
    <source>
        <strain>RS</strain>
    </source>
</reference>